<keyword id="KW-1185">Reference proteome</keyword>
<feature type="chain" id="PRO_1000014416" description="UPF0178 protein NT01CX_0440">
    <location>
        <begin position="1"/>
        <end position="149"/>
    </location>
</feature>
<dbReference type="EMBL" id="CP000382">
    <property type="protein sequence ID" value="ABK60612.1"/>
    <property type="molecule type" value="Genomic_DNA"/>
</dbReference>
<dbReference type="RefSeq" id="WP_011722895.1">
    <property type="nucleotide sequence ID" value="NC_008593.1"/>
</dbReference>
<dbReference type="STRING" id="386415.NT01CX_0440"/>
<dbReference type="KEGG" id="cno:NT01CX_0440"/>
<dbReference type="PATRIC" id="fig|386415.7.peg.1945"/>
<dbReference type="eggNOG" id="COG1671">
    <property type="taxonomic scope" value="Bacteria"/>
</dbReference>
<dbReference type="HOGENOM" id="CLU_106619_0_0_9"/>
<dbReference type="Proteomes" id="UP000008220">
    <property type="component" value="Chromosome"/>
</dbReference>
<dbReference type="HAMAP" id="MF_00489">
    <property type="entry name" value="UPF0178"/>
    <property type="match status" value="1"/>
</dbReference>
<dbReference type="InterPro" id="IPR003791">
    <property type="entry name" value="UPF0178"/>
</dbReference>
<dbReference type="NCBIfam" id="NF001095">
    <property type="entry name" value="PRK00124.1"/>
    <property type="match status" value="1"/>
</dbReference>
<dbReference type="PANTHER" id="PTHR35146">
    <property type="entry name" value="UPF0178 PROTEIN YAII"/>
    <property type="match status" value="1"/>
</dbReference>
<dbReference type="PANTHER" id="PTHR35146:SF1">
    <property type="entry name" value="UPF0178 PROTEIN YAII"/>
    <property type="match status" value="1"/>
</dbReference>
<dbReference type="Pfam" id="PF02639">
    <property type="entry name" value="DUF188"/>
    <property type="match status" value="1"/>
</dbReference>
<proteinExistence type="inferred from homology"/>
<sequence length="149" mass="16967">MRIIVDADACPGRNLIEKAAIENSVEVIMYCDINHELKSDYSEVRVVDSGFQSVDMKIINEAKENDIIVTQDYGVAAMVLGRKAFAISPKGYIYDDDNIDRLLFERHLSAKARRGGKKTFNPKKRTDEDNLRLYNNILKLINKAKEKSN</sequence>
<reference key="1">
    <citation type="journal article" date="2006" name="Nat. Biotechnol.">
        <title>The genome and transcriptomes of the anti-tumor agent Clostridium novyi-NT.</title>
        <authorList>
            <person name="Bettegowda C."/>
            <person name="Huang X."/>
            <person name="Lin J."/>
            <person name="Cheong I."/>
            <person name="Kohli M."/>
            <person name="Szabo S.A."/>
            <person name="Zhang X."/>
            <person name="Diaz L.A. Jr."/>
            <person name="Velculescu V.E."/>
            <person name="Parmigiani G."/>
            <person name="Kinzler K.W."/>
            <person name="Vogelstein B."/>
            <person name="Zhou S."/>
        </authorList>
    </citation>
    <scope>NUCLEOTIDE SEQUENCE [LARGE SCALE GENOMIC DNA]</scope>
    <source>
        <strain>NT</strain>
    </source>
</reference>
<evidence type="ECO:0000255" key="1">
    <source>
        <dbReference type="HAMAP-Rule" id="MF_00489"/>
    </source>
</evidence>
<organism>
    <name type="scientific">Clostridium novyi (strain NT)</name>
    <dbReference type="NCBI Taxonomy" id="386415"/>
    <lineage>
        <taxon>Bacteria</taxon>
        <taxon>Bacillati</taxon>
        <taxon>Bacillota</taxon>
        <taxon>Clostridia</taxon>
        <taxon>Eubacteriales</taxon>
        <taxon>Clostridiaceae</taxon>
        <taxon>Clostridium</taxon>
    </lineage>
</organism>
<name>Y440_CLONN</name>
<protein>
    <recommendedName>
        <fullName evidence="1">UPF0178 protein NT01CX_0440</fullName>
    </recommendedName>
</protein>
<comment type="similarity">
    <text evidence="1">Belongs to the UPF0178 family.</text>
</comment>
<accession>A0Q2Q9</accession>
<gene>
    <name type="ordered locus">NT01CX_0440</name>
</gene>